<organism>
    <name type="scientific">Escherichia coli (strain K12)</name>
    <dbReference type="NCBI Taxonomy" id="83333"/>
    <lineage>
        <taxon>Bacteria</taxon>
        <taxon>Pseudomonadati</taxon>
        <taxon>Pseudomonadota</taxon>
        <taxon>Gammaproteobacteria</taxon>
        <taxon>Enterobacterales</taxon>
        <taxon>Enterobacteriaceae</taxon>
        <taxon>Escherichia</taxon>
    </lineage>
</organism>
<comment type="subcellular location">
    <subcellularLocation>
        <location evidence="2">Cell inner membrane</location>
        <topology evidence="4">Multi-pass membrane protein</topology>
    </subcellularLocation>
</comment>
<comment type="disruption phenotype">
    <text evidence="3">No alteration in fatty acid composition.</text>
</comment>
<comment type="miscellaneous">
    <text evidence="5">Probably part of the fabR-yijD operon.</text>
</comment>
<gene>
    <name type="primary">yijD</name>
    <name type="ordered locus">b3964</name>
    <name type="ordered locus">JW3936</name>
</gene>
<evidence type="ECO:0000255" key="1"/>
<evidence type="ECO:0000269" key="2">
    <source>
    </source>
</evidence>
<evidence type="ECO:0000269" key="3">
    <source>
    </source>
</evidence>
<evidence type="ECO:0000305" key="4"/>
<evidence type="ECO:0000305" key="5">
    <source>
    </source>
</evidence>
<proteinExistence type="evidence at protein level"/>
<name>YIJD_ECOLI</name>
<dbReference type="EMBL" id="X66026">
    <property type="protein sequence ID" value="CAA46824.1"/>
    <property type="molecule type" value="Genomic_DNA"/>
</dbReference>
<dbReference type="EMBL" id="U00006">
    <property type="protein sequence ID" value="AAC43070.1"/>
    <property type="molecule type" value="Genomic_DNA"/>
</dbReference>
<dbReference type="EMBL" id="U00096">
    <property type="protein sequence ID" value="AAC76946.1"/>
    <property type="molecule type" value="Genomic_DNA"/>
</dbReference>
<dbReference type="EMBL" id="AP009048">
    <property type="protein sequence ID" value="BAE77347.1"/>
    <property type="molecule type" value="Genomic_DNA"/>
</dbReference>
<dbReference type="PIR" id="G65203">
    <property type="entry name" value="G65203"/>
</dbReference>
<dbReference type="PIR" id="S21565">
    <property type="entry name" value="S21565"/>
</dbReference>
<dbReference type="RefSeq" id="NP_418399.1">
    <property type="nucleotide sequence ID" value="NC_000913.3"/>
</dbReference>
<dbReference type="RefSeq" id="WP_000806411.1">
    <property type="nucleotide sequence ID" value="NZ_STEB01000037.1"/>
</dbReference>
<dbReference type="BioGRID" id="4262183">
    <property type="interactions" value="10"/>
</dbReference>
<dbReference type="BioGRID" id="852755">
    <property type="interactions" value="2"/>
</dbReference>
<dbReference type="FunCoup" id="P0AF40">
    <property type="interactions" value="90"/>
</dbReference>
<dbReference type="IntAct" id="P0AF40">
    <property type="interactions" value="2"/>
</dbReference>
<dbReference type="STRING" id="511145.b3964"/>
<dbReference type="PaxDb" id="511145-b3964"/>
<dbReference type="EnsemblBacteria" id="AAC76946">
    <property type="protein sequence ID" value="AAC76946"/>
    <property type="gene ID" value="b3964"/>
</dbReference>
<dbReference type="GeneID" id="948459"/>
<dbReference type="KEGG" id="ecj:JW3936"/>
<dbReference type="KEGG" id="eco:b3964"/>
<dbReference type="KEGG" id="ecoc:C3026_21420"/>
<dbReference type="PATRIC" id="fig|1411691.4.peg.2740"/>
<dbReference type="EchoBASE" id="EB1368"/>
<dbReference type="eggNOG" id="ENOG5031GYK">
    <property type="taxonomic scope" value="Bacteria"/>
</dbReference>
<dbReference type="HOGENOM" id="CLU_138008_1_0_6"/>
<dbReference type="InParanoid" id="P0AF40"/>
<dbReference type="OMA" id="EAGSNFF"/>
<dbReference type="OrthoDB" id="6215223at2"/>
<dbReference type="PhylomeDB" id="P0AF40"/>
<dbReference type="BioCyc" id="EcoCyc:EG11395-MONOMER"/>
<dbReference type="PRO" id="PR:P0AF40"/>
<dbReference type="Proteomes" id="UP000000625">
    <property type="component" value="Chromosome"/>
</dbReference>
<dbReference type="GO" id="GO:0005886">
    <property type="term" value="C:plasma membrane"/>
    <property type="evidence" value="ECO:0000314"/>
    <property type="project" value="EcoCyc"/>
</dbReference>
<dbReference type="InterPro" id="IPR009867">
    <property type="entry name" value="DUF1422"/>
</dbReference>
<dbReference type="NCBIfam" id="NF008278">
    <property type="entry name" value="PRK11056.1"/>
    <property type="match status" value="1"/>
</dbReference>
<dbReference type="Pfam" id="PF07226">
    <property type="entry name" value="DUF1422"/>
    <property type="match status" value="1"/>
</dbReference>
<keyword id="KW-0997">Cell inner membrane</keyword>
<keyword id="KW-1003">Cell membrane</keyword>
<keyword id="KW-0472">Membrane</keyword>
<keyword id="KW-1185">Reference proteome</keyword>
<keyword id="KW-0812">Transmembrane</keyword>
<keyword id="KW-1133">Transmembrane helix</keyword>
<reference key="1">
    <citation type="journal article" date="1992" name="J. Bacteriol.">
        <title>Physical map of the oxyR-trmA region (minute 89.3) of the Escherichia coli chromosome.</title>
        <authorList>
            <person name="Gustafsson C."/>
            <person name="Warne S.R."/>
        </authorList>
    </citation>
    <scope>NUCLEOTIDE SEQUENCE [GENOMIC DNA]</scope>
    <source>
        <strain>K12</strain>
    </source>
</reference>
<reference key="2">
    <citation type="journal article" date="1993" name="Nucleic Acids Res.">
        <title>Analysis of the Escherichia coli genome. IV. DNA sequence of the region from 89.2 to 92.8 minutes.</title>
        <authorList>
            <person name="Blattner F.R."/>
            <person name="Burland V.D."/>
            <person name="Plunkett G. III"/>
            <person name="Sofia H.J."/>
            <person name="Daniels D.L."/>
        </authorList>
    </citation>
    <scope>NUCLEOTIDE SEQUENCE [LARGE SCALE GENOMIC DNA]</scope>
    <source>
        <strain>K12 / MG1655 / ATCC 47076</strain>
    </source>
</reference>
<reference key="3">
    <citation type="journal article" date="1997" name="Science">
        <title>The complete genome sequence of Escherichia coli K-12.</title>
        <authorList>
            <person name="Blattner F.R."/>
            <person name="Plunkett G. III"/>
            <person name="Bloch C.A."/>
            <person name="Perna N.T."/>
            <person name="Burland V."/>
            <person name="Riley M."/>
            <person name="Collado-Vides J."/>
            <person name="Glasner J.D."/>
            <person name="Rode C.K."/>
            <person name="Mayhew G.F."/>
            <person name="Gregor J."/>
            <person name="Davis N.W."/>
            <person name="Kirkpatrick H.A."/>
            <person name="Goeden M.A."/>
            <person name="Rose D.J."/>
            <person name="Mau B."/>
            <person name="Shao Y."/>
        </authorList>
    </citation>
    <scope>NUCLEOTIDE SEQUENCE [LARGE SCALE GENOMIC DNA]</scope>
    <source>
        <strain>K12 / MG1655 / ATCC 47076</strain>
    </source>
</reference>
<reference key="4">
    <citation type="journal article" date="2006" name="Mol. Syst. Biol.">
        <title>Highly accurate genome sequences of Escherichia coli K-12 strains MG1655 and W3110.</title>
        <authorList>
            <person name="Hayashi K."/>
            <person name="Morooka N."/>
            <person name="Yamamoto Y."/>
            <person name="Fujita K."/>
            <person name="Isono K."/>
            <person name="Choi S."/>
            <person name="Ohtsubo E."/>
            <person name="Baba T."/>
            <person name="Wanner B.L."/>
            <person name="Mori H."/>
            <person name="Horiuchi T."/>
        </authorList>
    </citation>
    <scope>NUCLEOTIDE SEQUENCE [LARGE SCALE GENOMIC DNA]</scope>
    <source>
        <strain>K12 / W3110 / ATCC 27325 / DSM 5911</strain>
    </source>
</reference>
<reference key="5">
    <citation type="journal article" date="2005" name="Science">
        <title>Global topology analysis of the Escherichia coli inner membrane proteome.</title>
        <authorList>
            <person name="Daley D.O."/>
            <person name="Rapp M."/>
            <person name="Granseth E."/>
            <person name="Melen K."/>
            <person name="Drew D."/>
            <person name="von Heijne G."/>
        </authorList>
    </citation>
    <scope>SUBCELLULAR LOCATION</scope>
    <scope>TOPOLOGY [LARGE SCALE ANALYSIS]</scope>
    <source>
        <strain>K12 / MG1655 / ATCC 47076</strain>
    </source>
</reference>
<reference key="6">
    <citation type="journal article" date="2009" name="J. Biol. Chem.">
        <title>Transcriptional regulation of membrane lipid homeostasis in Escherichia coli.</title>
        <authorList>
            <person name="Zhu K."/>
            <person name="Zhang Y.M."/>
            <person name="Rock C.O."/>
        </authorList>
    </citation>
    <scope>DISRUPTION PHENOTYPE</scope>
    <source>
        <strain>K12</strain>
    </source>
</reference>
<protein>
    <recommendedName>
        <fullName>Inner membrane protein YijD</fullName>
    </recommendedName>
</protein>
<accession>P0AF40</accession>
<accession>P27308</accession>
<accession>Q2M8Q9</accession>
<sequence length="119" mass="13024">MKQANQDRGTLLLALVAGLSINGTFAALFSSIVPFSVFPIISLVLTVYCLHQRYLNRTMPVGLPGLAAACFILGVLLYSTVVRAEYPDIGSNFFPAVLSVIMVFWIGAKMRNRKQEVAE</sequence>
<feature type="chain" id="PRO_0000169698" description="Inner membrane protein YijD">
    <location>
        <begin position="1"/>
        <end position="119"/>
    </location>
</feature>
<feature type="topological domain" description="Cytoplasmic" evidence="1">
    <location>
        <begin position="1"/>
        <end position="8"/>
    </location>
</feature>
<feature type="transmembrane region" description="Helical" evidence="1">
    <location>
        <begin position="9"/>
        <end position="28"/>
    </location>
</feature>
<feature type="topological domain" description="Periplasmic" evidence="1">
    <location>
        <begin position="29"/>
        <end position="31"/>
    </location>
</feature>
<feature type="transmembrane region" description="Helical" evidence="1">
    <location>
        <begin position="32"/>
        <end position="50"/>
    </location>
</feature>
<feature type="topological domain" description="Cytoplasmic" evidence="1">
    <location>
        <begin position="51"/>
        <end position="61"/>
    </location>
</feature>
<feature type="transmembrane region" description="Helical" evidence="1">
    <location>
        <begin position="62"/>
        <end position="84"/>
    </location>
</feature>
<feature type="topological domain" description="Periplasmic" evidence="1">
    <location>
        <begin position="85"/>
        <end position="88"/>
    </location>
</feature>
<feature type="transmembrane region" description="Helical" evidence="1">
    <location>
        <begin position="89"/>
        <end position="108"/>
    </location>
</feature>
<feature type="topological domain" description="Cytoplasmic" evidence="1 2">
    <location>
        <begin position="109"/>
        <end position="119"/>
    </location>
</feature>
<feature type="sequence conflict" description="In Ref. 1; CAA46824." evidence="4" ref="1">
    <original>L</original>
    <variation>LL</variation>
    <location>
        <position position="13"/>
    </location>
</feature>
<feature type="sequence conflict" description="In Ref. 1; CAA46824." evidence="4" ref="1">
    <original>F</original>
    <variation>L</variation>
    <location>
        <position position="94"/>
    </location>
</feature>
<feature type="sequence conflict" description="In Ref. 1; CAA46824." evidence="4" ref="1">
    <original>VIMVFWIGAKM</original>
    <variation>SLWCSGLARRW</variation>
    <location>
        <begin position="100"/>
        <end position="110"/>
    </location>
</feature>